<reference key="1">
    <citation type="submission" date="2006-10" db="EMBL/GenBank/DDBJ databases">
        <authorList>
            <person name="Fleischmann R.D."/>
            <person name="Dodson R.J."/>
            <person name="Haft D.H."/>
            <person name="Merkel J.S."/>
            <person name="Nelson W.C."/>
            <person name="Fraser C.M."/>
        </authorList>
    </citation>
    <scope>NUCLEOTIDE SEQUENCE [LARGE SCALE GENOMIC DNA]</scope>
    <source>
        <strain>ATCC 700084 / mc(2)155</strain>
    </source>
</reference>
<reference key="2">
    <citation type="journal article" date="2007" name="Genome Biol.">
        <title>Interrupted coding sequences in Mycobacterium smegmatis: authentic mutations or sequencing errors?</title>
        <authorList>
            <person name="Deshayes C."/>
            <person name="Perrodou E."/>
            <person name="Gallien S."/>
            <person name="Euphrasie D."/>
            <person name="Schaeffer C."/>
            <person name="Van-Dorsselaer A."/>
            <person name="Poch O."/>
            <person name="Lecompte O."/>
            <person name="Reyrat J.-M."/>
        </authorList>
    </citation>
    <scope>NUCLEOTIDE SEQUENCE [LARGE SCALE GENOMIC DNA]</scope>
    <source>
        <strain>ATCC 700084 / mc(2)155</strain>
    </source>
</reference>
<reference key="3">
    <citation type="journal article" date="2009" name="Genome Res.">
        <title>Ortho-proteogenomics: multiple proteomes investigation through orthology and a new MS-based protocol.</title>
        <authorList>
            <person name="Gallien S."/>
            <person name="Perrodou E."/>
            <person name="Carapito C."/>
            <person name="Deshayes C."/>
            <person name="Reyrat J.-M."/>
            <person name="Van Dorsselaer A."/>
            <person name="Poch O."/>
            <person name="Schaeffer C."/>
            <person name="Lecompte O."/>
        </authorList>
    </citation>
    <scope>NUCLEOTIDE SEQUENCE [LARGE SCALE GENOMIC DNA]</scope>
    <scope>IDENTIFICATION BY MASS SPECTROMETRY [LARGE SCALE ANALYSIS]</scope>
    <scope>CLEAVAGE OF INITIATOR METHIONINE</scope>
    <source>
        <strain>ATCC 700084 / mc(2)155</strain>
    </source>
</reference>
<proteinExistence type="evidence at protein level"/>
<accession>A0QQC8</accession>
<accession>I7FWU6</accession>
<feature type="initiator methionine" description="Removed" evidence="3">
    <location>
        <position position="1"/>
    </location>
</feature>
<feature type="chain" id="PRO_1000059607" description="Chaperone protein DnaK">
    <location>
        <begin position="2"/>
        <end position="622"/>
    </location>
</feature>
<feature type="region of interest" description="Disordered" evidence="2">
    <location>
        <begin position="584"/>
        <end position="622"/>
    </location>
</feature>
<feature type="compositionally biased region" description="Acidic residues" evidence="2">
    <location>
        <begin position="606"/>
        <end position="615"/>
    </location>
</feature>
<feature type="modified residue" description="Phosphothreonine; by autocatalysis" evidence="1">
    <location>
        <position position="175"/>
    </location>
</feature>
<comment type="function">
    <text evidence="1">Acts as a chaperone.</text>
</comment>
<comment type="induction">
    <text evidence="1">By stress conditions e.g. heat shock.</text>
</comment>
<comment type="similarity">
    <text evidence="1">Belongs to the heat shock protein 70 family.</text>
</comment>
<keyword id="KW-0067">ATP-binding</keyword>
<keyword id="KW-0143">Chaperone</keyword>
<keyword id="KW-0547">Nucleotide-binding</keyword>
<keyword id="KW-0597">Phosphoprotein</keyword>
<keyword id="KW-1185">Reference proteome</keyword>
<keyword id="KW-0346">Stress response</keyword>
<gene>
    <name evidence="1" type="primary">dnaK</name>
    <name type="ordered locus">MSMEG_0709</name>
    <name type="ordered locus">MSMEI_0692</name>
</gene>
<sequence length="622" mass="66647">MARAVGIDLGTTNSVVAVLEGGDPVVVANSEGSRTTPSVVAFARNGEVLVGQPAKNQAVTNVDRTIRSVKRHVGTDWNIEIDDKKYTPQEISARVLMKLKRDAESYLGEDITDAVITVPAYFNDAQRQATKEAGQIAGLNVLRIVNEPTAAALAYGLDKGEKEQTILVFDLGGGTFDVSLLEIGDGVVEVRATSGDNHLGGDDWDDRIVTWLVDKFKGSSGIDLTKDKMAMQRLREAAEKAKIELSSSQSTSINLPYITVDADKNPLFLDEQLTRAEFQRITQDLLDRTRQPFQQVIKDAGISVSDIDHVVLVGGSTRMPAVTDLVKELTGGKEPNKGVNPDEVVAVGAALQAGVLKGEVKDVLLLDVTPLSLGIETKGGVMTKLIERNTTIPTKRSETFTTADDNQPSVQIQVYQGEREIASHNKLLGSFELTGIPPAPRGVPQIEVTFDIDANGIVHVTAKDKGTGKENTIKIQEGSGLSKEEIDRMIKDAEAHAEEDRKRREEADVRNQAESLVYQTEKFVAEQRGAASDGGGSKVPEETLAKVDSAIADAKKALEGTDISAIKSAMEKLGVESQALGQAIYEATQAEQPAGGSDNGAPGDDNVVDAEVVDDDAGKENK</sequence>
<name>DNAK_MYCS2</name>
<organism>
    <name type="scientific">Mycolicibacterium smegmatis (strain ATCC 700084 / mc(2)155)</name>
    <name type="common">Mycobacterium smegmatis</name>
    <dbReference type="NCBI Taxonomy" id="246196"/>
    <lineage>
        <taxon>Bacteria</taxon>
        <taxon>Bacillati</taxon>
        <taxon>Actinomycetota</taxon>
        <taxon>Actinomycetes</taxon>
        <taxon>Mycobacteriales</taxon>
        <taxon>Mycobacteriaceae</taxon>
        <taxon>Mycolicibacterium</taxon>
    </lineage>
</organism>
<evidence type="ECO:0000255" key="1">
    <source>
        <dbReference type="HAMAP-Rule" id="MF_00332"/>
    </source>
</evidence>
<evidence type="ECO:0000256" key="2">
    <source>
        <dbReference type="SAM" id="MobiDB-lite"/>
    </source>
</evidence>
<evidence type="ECO:0000269" key="3">
    <source>
    </source>
</evidence>
<dbReference type="EMBL" id="CP000480">
    <property type="protein sequence ID" value="ABK74606.1"/>
    <property type="molecule type" value="Genomic_DNA"/>
</dbReference>
<dbReference type="EMBL" id="CP001663">
    <property type="protein sequence ID" value="AFP37172.1"/>
    <property type="molecule type" value="Genomic_DNA"/>
</dbReference>
<dbReference type="RefSeq" id="WP_003892134.1">
    <property type="nucleotide sequence ID" value="NZ_SIJM01000009.1"/>
</dbReference>
<dbReference type="RefSeq" id="YP_885116.1">
    <property type="nucleotide sequence ID" value="NC_008596.1"/>
</dbReference>
<dbReference type="SMR" id="A0QQC8"/>
<dbReference type="STRING" id="246196.MSMEG_0709"/>
<dbReference type="PaxDb" id="246196-MSMEI_0692"/>
<dbReference type="GeneID" id="93455621"/>
<dbReference type="KEGG" id="msb:LJ00_03520"/>
<dbReference type="KEGG" id="msg:MSMEI_0692"/>
<dbReference type="KEGG" id="msm:MSMEG_0709"/>
<dbReference type="PATRIC" id="fig|246196.19.peg.705"/>
<dbReference type="eggNOG" id="COG0443">
    <property type="taxonomic scope" value="Bacteria"/>
</dbReference>
<dbReference type="OrthoDB" id="9766019at2"/>
<dbReference type="Proteomes" id="UP000000757">
    <property type="component" value="Chromosome"/>
</dbReference>
<dbReference type="Proteomes" id="UP000006158">
    <property type="component" value="Chromosome"/>
</dbReference>
<dbReference type="GO" id="GO:0005524">
    <property type="term" value="F:ATP binding"/>
    <property type="evidence" value="ECO:0007669"/>
    <property type="project" value="UniProtKB-UniRule"/>
</dbReference>
<dbReference type="GO" id="GO:0140662">
    <property type="term" value="F:ATP-dependent protein folding chaperone"/>
    <property type="evidence" value="ECO:0007669"/>
    <property type="project" value="InterPro"/>
</dbReference>
<dbReference type="GO" id="GO:0051082">
    <property type="term" value="F:unfolded protein binding"/>
    <property type="evidence" value="ECO:0007669"/>
    <property type="project" value="InterPro"/>
</dbReference>
<dbReference type="GO" id="GO:0072659">
    <property type="term" value="P:protein localization to plasma membrane"/>
    <property type="evidence" value="ECO:0000315"/>
    <property type="project" value="CACAO"/>
</dbReference>
<dbReference type="CDD" id="cd10234">
    <property type="entry name" value="ASKHA_NBD_HSP70_DnaK-like"/>
    <property type="match status" value="1"/>
</dbReference>
<dbReference type="FunFam" id="2.60.34.10:FF:000014">
    <property type="entry name" value="Chaperone protein DnaK HSP70"/>
    <property type="match status" value="1"/>
</dbReference>
<dbReference type="FunFam" id="1.20.1270.10:FF:000001">
    <property type="entry name" value="Molecular chaperone DnaK"/>
    <property type="match status" value="1"/>
</dbReference>
<dbReference type="FunFam" id="3.30.420.40:FF:000071">
    <property type="entry name" value="Molecular chaperone DnaK"/>
    <property type="match status" value="1"/>
</dbReference>
<dbReference type="FunFam" id="3.90.640.10:FF:000003">
    <property type="entry name" value="Molecular chaperone DnaK"/>
    <property type="match status" value="1"/>
</dbReference>
<dbReference type="Gene3D" id="1.20.1270.10">
    <property type="match status" value="1"/>
</dbReference>
<dbReference type="Gene3D" id="3.30.420.40">
    <property type="match status" value="3"/>
</dbReference>
<dbReference type="Gene3D" id="3.90.640.10">
    <property type="entry name" value="Actin, Chain A, domain 4"/>
    <property type="match status" value="1"/>
</dbReference>
<dbReference type="Gene3D" id="2.60.34.10">
    <property type="entry name" value="Substrate Binding Domain Of DNAk, Chain A, domain 1"/>
    <property type="match status" value="1"/>
</dbReference>
<dbReference type="HAMAP" id="MF_00332">
    <property type="entry name" value="DnaK"/>
    <property type="match status" value="1"/>
</dbReference>
<dbReference type="InterPro" id="IPR043129">
    <property type="entry name" value="ATPase_NBD"/>
</dbReference>
<dbReference type="InterPro" id="IPR012725">
    <property type="entry name" value="Chaperone_DnaK"/>
</dbReference>
<dbReference type="InterPro" id="IPR018181">
    <property type="entry name" value="Heat_shock_70_CS"/>
</dbReference>
<dbReference type="InterPro" id="IPR029048">
    <property type="entry name" value="HSP70_C_sf"/>
</dbReference>
<dbReference type="InterPro" id="IPR029047">
    <property type="entry name" value="HSP70_peptide-bd_sf"/>
</dbReference>
<dbReference type="InterPro" id="IPR013126">
    <property type="entry name" value="Hsp_70_fam"/>
</dbReference>
<dbReference type="NCBIfam" id="NF001413">
    <property type="entry name" value="PRK00290.1"/>
    <property type="match status" value="1"/>
</dbReference>
<dbReference type="NCBIfam" id="TIGR02350">
    <property type="entry name" value="prok_dnaK"/>
    <property type="match status" value="1"/>
</dbReference>
<dbReference type="PANTHER" id="PTHR19375">
    <property type="entry name" value="HEAT SHOCK PROTEIN 70KDA"/>
    <property type="match status" value="1"/>
</dbReference>
<dbReference type="Pfam" id="PF00012">
    <property type="entry name" value="HSP70"/>
    <property type="match status" value="2"/>
</dbReference>
<dbReference type="PRINTS" id="PR00301">
    <property type="entry name" value="HEATSHOCK70"/>
</dbReference>
<dbReference type="SUPFAM" id="SSF53067">
    <property type="entry name" value="Actin-like ATPase domain"/>
    <property type="match status" value="2"/>
</dbReference>
<dbReference type="SUPFAM" id="SSF100934">
    <property type="entry name" value="Heat shock protein 70kD (HSP70), C-terminal subdomain"/>
    <property type="match status" value="1"/>
</dbReference>
<dbReference type="SUPFAM" id="SSF100920">
    <property type="entry name" value="Heat shock protein 70kD (HSP70), peptide-binding domain"/>
    <property type="match status" value="1"/>
</dbReference>
<dbReference type="PROSITE" id="PS00297">
    <property type="entry name" value="HSP70_1"/>
    <property type="match status" value="1"/>
</dbReference>
<dbReference type="PROSITE" id="PS00329">
    <property type="entry name" value="HSP70_2"/>
    <property type="match status" value="1"/>
</dbReference>
<dbReference type="PROSITE" id="PS01036">
    <property type="entry name" value="HSP70_3"/>
    <property type="match status" value="1"/>
</dbReference>
<protein>
    <recommendedName>
        <fullName evidence="1">Chaperone protein DnaK</fullName>
    </recommendedName>
    <alternativeName>
        <fullName evidence="1">HSP70</fullName>
    </alternativeName>
    <alternativeName>
        <fullName evidence="1">Heat shock 70 kDa protein</fullName>
    </alternativeName>
    <alternativeName>
        <fullName evidence="1">Heat shock protein 70</fullName>
    </alternativeName>
</protein>